<feature type="signal peptide" evidence="2">
    <location>
        <begin position="1"/>
        <end position="23"/>
    </location>
</feature>
<feature type="propeptide" id="PRO_0000013145" evidence="3">
    <location>
        <begin position="24"/>
        <end position="94"/>
    </location>
</feature>
<feature type="peptide" id="PRO_0000013146" description="Uroguanylin">
    <location>
        <begin position="95"/>
        <end position="109"/>
    </location>
</feature>
<feature type="disulfide bond" evidence="1">
    <location>
        <begin position="65"/>
        <end position="78"/>
    </location>
</feature>
<feature type="disulfide bond" evidence="1">
    <location>
        <begin position="98"/>
        <end position="106"/>
    </location>
</feature>
<feature type="disulfide bond" evidence="1">
    <location>
        <begin position="101"/>
        <end position="109"/>
    </location>
</feature>
<reference key="1">
    <citation type="journal article" date="1996" name="Biochem. Biophys. Res. Commun.">
        <title>Uroguanylin: cloning of preprouroguanylin cDNA, mRNA expression in the intestine and heart and isolation of uroguanylin and prouroguanylin from plasma.</title>
        <authorList>
            <person name="Fan X."/>
            <person name="Hamra F.K."/>
            <person name="Freeman R.H."/>
            <person name="Eber S.L."/>
            <person name="Krause W.J."/>
            <person name="Lim R.W."/>
            <person name="Pace V.M."/>
            <person name="Currie M.G."/>
            <person name="Forte L.R."/>
        </authorList>
    </citation>
    <scope>NUCLEOTIDE SEQUENCE [MRNA]</scope>
    <source>
        <tissue>Colon</tissue>
    </source>
</reference>
<reference key="2">
    <citation type="journal article" date="1993" name="Proc. Natl. Acad. Sci. U.S.A.">
        <title>Uroguanylin: structure and activity of a second endogenous peptide that stimulates intestinal guanylate cyclase.</title>
        <authorList>
            <person name="Hamra F.K."/>
            <person name="Forte L.R."/>
            <person name="Eber S.L."/>
            <person name="Pidhorodeckyj N.V."/>
            <person name="Krause W.J."/>
            <person name="Freeman R.H."/>
            <person name="Chin D.T."/>
            <person name="Tompkins J.A."/>
            <person name="Fok K.F."/>
            <person name="Smith C.E."/>
            <person name="Duffin K.L."/>
            <person name="Siegel N.R."/>
            <person name="Currie M.G."/>
        </authorList>
    </citation>
    <scope>PROTEIN SEQUENCE OF 95-109</scope>
    <source>
        <tissue>Urine</tissue>
    </source>
</reference>
<organism>
    <name type="scientific">Didelphis virginiana</name>
    <name type="common">North American opossum</name>
    <name type="synonym">Didelphis marsupialis virginiana</name>
    <dbReference type="NCBI Taxonomy" id="9267"/>
    <lineage>
        <taxon>Eukaryota</taxon>
        <taxon>Metazoa</taxon>
        <taxon>Chordata</taxon>
        <taxon>Craniata</taxon>
        <taxon>Vertebrata</taxon>
        <taxon>Euteleostomi</taxon>
        <taxon>Mammalia</taxon>
        <taxon>Metatheria</taxon>
        <taxon>Didelphimorphia</taxon>
        <taxon>Didelphidae</taxon>
        <taxon>Didelphis</taxon>
    </lineage>
</organism>
<dbReference type="EMBL" id="U49353">
    <property type="protein sequence ID" value="AAB00553.1"/>
    <property type="molecule type" value="mRNA"/>
</dbReference>
<dbReference type="SMR" id="Q28358"/>
<dbReference type="GO" id="GO:0005576">
    <property type="term" value="C:extracellular region"/>
    <property type="evidence" value="ECO:0007669"/>
    <property type="project" value="UniProtKB-SubCell"/>
</dbReference>
<dbReference type="GO" id="GO:0030250">
    <property type="term" value="F:guanylate cyclase activator activity"/>
    <property type="evidence" value="ECO:0007669"/>
    <property type="project" value="InterPro"/>
</dbReference>
<dbReference type="FunFam" id="3.90.1450.10:FF:000001">
    <property type="entry name" value="Guanylate cyclase activator 2B"/>
    <property type="match status" value="1"/>
</dbReference>
<dbReference type="Gene3D" id="3.90.1450.10">
    <property type="entry name" value="Guanylin"/>
    <property type="match status" value="1"/>
</dbReference>
<dbReference type="InterPro" id="IPR000879">
    <property type="entry name" value="Guanylin"/>
</dbReference>
<dbReference type="InterPro" id="IPR036382">
    <property type="entry name" value="Guanylin_sf"/>
</dbReference>
<dbReference type="PANTHER" id="PTHR11318:SF4">
    <property type="entry name" value="GUANYLATE CYCLASE ACTIVATOR 2B"/>
    <property type="match status" value="1"/>
</dbReference>
<dbReference type="PANTHER" id="PTHR11318">
    <property type="entry name" value="GUANYLIN FAMILY MEMBER"/>
    <property type="match status" value="1"/>
</dbReference>
<dbReference type="Pfam" id="PF02058">
    <property type="entry name" value="Guanylin"/>
    <property type="match status" value="1"/>
</dbReference>
<dbReference type="PIRSF" id="PIRSF001849">
    <property type="entry name" value="Guanylin"/>
    <property type="match status" value="1"/>
</dbReference>
<dbReference type="PRINTS" id="PR00774">
    <property type="entry name" value="GUANYLIN"/>
</dbReference>
<dbReference type="SUPFAM" id="SSF89890">
    <property type="entry name" value="Proguanylin"/>
    <property type="match status" value="1"/>
</dbReference>
<proteinExistence type="evidence at protein level"/>
<keyword id="KW-0903">Direct protein sequencing</keyword>
<keyword id="KW-1015">Disulfide bond</keyword>
<keyword id="KW-0964">Secreted</keyword>
<keyword id="KW-0732">Signal</keyword>
<evidence type="ECO:0000250" key="1"/>
<evidence type="ECO:0000255" key="2"/>
<evidence type="ECO:0000269" key="3">
    <source>
    </source>
</evidence>
<evidence type="ECO:0000305" key="4"/>
<name>GUC2B_DIDVI</name>
<accession>Q28358</accession>
<comment type="function">
    <text>Endogenous activator of intestinal guanylate cyclase. It stimulates this enzyme through the same receptor binding region as the heat-stable enterotoxins. May be a potent physiological regulator of intestinal fluid and electrolyte transport. May be an autocrine/paracrine regulator of intestinal salt and water transport.</text>
</comment>
<comment type="subcellular location">
    <subcellularLocation>
        <location>Secreted</location>
    </subcellularLocation>
</comment>
<comment type="tissue specificity">
    <text>Small and large intestine and atria and ventricles of heart. Both uroguanylin and prouroguanylin are found in plasma.</text>
</comment>
<comment type="similarity">
    <text evidence="4">Belongs to the guanylin family.</text>
</comment>
<protein>
    <recommendedName>
        <fullName>Guanylate cyclase activator 2B</fullName>
    </recommendedName>
    <component>
        <recommendedName>
            <fullName>Uroguanylin</fullName>
            <shortName>UGN</shortName>
        </recommendedName>
    </component>
</protein>
<gene>
    <name type="primary">GUCA2B</name>
</gene>
<sequence length="109" mass="12040">MKVLALPVAVAAMLLVLAQNTQSVYIQYEGFQVKLDSVKKLDELLEQPRSFRHRMGTQRDPSVLCSDPALPSDLQPVCENSQAANIFRALRSISQEDCELCINVACTGC</sequence>